<name>RUVB_LISMH</name>
<sequence>MDERIISSETVDAEEVSFETSLRPQTLSQYIGQDKVKNNLTVFIEAATLRNEALDHVLLYGPPGLGKTTLAMVIASEMGSQIKTTSGPAIERPGDLATILTSLEPGDVLFIDEIHRLSRAIEEILYPAMEDYCLDIVIGTGPTARSVRLDLPPFTLIGATTRAGLLSAPLRDRFGVIDHLEFYTEEQLTEIVLRTSNILDTKIDDLGAREIARRSRGTPRIANRLLKRVRDFAQVRGNGTVTEKLAKEALTLLQVDPRGLDTIDQKLLHTIIQSFRGGPVGLDTIAASIGEERETIEDMQEPYLLQIGFLQRTPRGRIATETAYNHLGISYEKEV</sequence>
<dbReference type="EC" id="3.6.4.-" evidence="1"/>
<dbReference type="EMBL" id="CP001175">
    <property type="protein sequence ID" value="ACK39385.1"/>
    <property type="molecule type" value="Genomic_DNA"/>
</dbReference>
<dbReference type="RefSeq" id="WP_003739008.1">
    <property type="nucleotide sequence ID" value="NC_011660.1"/>
</dbReference>
<dbReference type="SMR" id="B8DHL6"/>
<dbReference type="KEGG" id="lmh:LMHCC_1037"/>
<dbReference type="HOGENOM" id="CLU_055599_1_0_9"/>
<dbReference type="GO" id="GO:0005737">
    <property type="term" value="C:cytoplasm"/>
    <property type="evidence" value="ECO:0007669"/>
    <property type="project" value="UniProtKB-SubCell"/>
</dbReference>
<dbReference type="GO" id="GO:0048476">
    <property type="term" value="C:Holliday junction resolvase complex"/>
    <property type="evidence" value="ECO:0007669"/>
    <property type="project" value="UniProtKB-UniRule"/>
</dbReference>
<dbReference type="GO" id="GO:0005524">
    <property type="term" value="F:ATP binding"/>
    <property type="evidence" value="ECO:0007669"/>
    <property type="project" value="UniProtKB-UniRule"/>
</dbReference>
<dbReference type="GO" id="GO:0016887">
    <property type="term" value="F:ATP hydrolysis activity"/>
    <property type="evidence" value="ECO:0007669"/>
    <property type="project" value="InterPro"/>
</dbReference>
<dbReference type="GO" id="GO:0000400">
    <property type="term" value="F:four-way junction DNA binding"/>
    <property type="evidence" value="ECO:0007669"/>
    <property type="project" value="UniProtKB-UniRule"/>
</dbReference>
<dbReference type="GO" id="GO:0009378">
    <property type="term" value="F:four-way junction helicase activity"/>
    <property type="evidence" value="ECO:0007669"/>
    <property type="project" value="InterPro"/>
</dbReference>
<dbReference type="GO" id="GO:0006310">
    <property type="term" value="P:DNA recombination"/>
    <property type="evidence" value="ECO:0007669"/>
    <property type="project" value="UniProtKB-UniRule"/>
</dbReference>
<dbReference type="GO" id="GO:0006281">
    <property type="term" value="P:DNA repair"/>
    <property type="evidence" value="ECO:0007669"/>
    <property type="project" value="UniProtKB-UniRule"/>
</dbReference>
<dbReference type="CDD" id="cd00009">
    <property type="entry name" value="AAA"/>
    <property type="match status" value="1"/>
</dbReference>
<dbReference type="Gene3D" id="1.10.8.60">
    <property type="match status" value="1"/>
</dbReference>
<dbReference type="Gene3D" id="3.40.50.300">
    <property type="entry name" value="P-loop containing nucleotide triphosphate hydrolases"/>
    <property type="match status" value="1"/>
</dbReference>
<dbReference type="Gene3D" id="1.10.10.10">
    <property type="entry name" value="Winged helix-like DNA-binding domain superfamily/Winged helix DNA-binding domain"/>
    <property type="match status" value="1"/>
</dbReference>
<dbReference type="HAMAP" id="MF_00016">
    <property type="entry name" value="DNA_HJ_migration_RuvB"/>
    <property type="match status" value="1"/>
</dbReference>
<dbReference type="InterPro" id="IPR003593">
    <property type="entry name" value="AAA+_ATPase"/>
</dbReference>
<dbReference type="InterPro" id="IPR041445">
    <property type="entry name" value="AAA_lid_4"/>
</dbReference>
<dbReference type="InterPro" id="IPR004605">
    <property type="entry name" value="DNA_helicase_Holl-junc_RuvB"/>
</dbReference>
<dbReference type="InterPro" id="IPR027417">
    <property type="entry name" value="P-loop_NTPase"/>
</dbReference>
<dbReference type="InterPro" id="IPR008824">
    <property type="entry name" value="RuvB-like_N"/>
</dbReference>
<dbReference type="InterPro" id="IPR008823">
    <property type="entry name" value="RuvB_C"/>
</dbReference>
<dbReference type="InterPro" id="IPR036388">
    <property type="entry name" value="WH-like_DNA-bd_sf"/>
</dbReference>
<dbReference type="InterPro" id="IPR036390">
    <property type="entry name" value="WH_DNA-bd_sf"/>
</dbReference>
<dbReference type="NCBIfam" id="NF000868">
    <property type="entry name" value="PRK00080.1"/>
    <property type="match status" value="1"/>
</dbReference>
<dbReference type="NCBIfam" id="TIGR00635">
    <property type="entry name" value="ruvB"/>
    <property type="match status" value="1"/>
</dbReference>
<dbReference type="PANTHER" id="PTHR42848">
    <property type="match status" value="1"/>
</dbReference>
<dbReference type="PANTHER" id="PTHR42848:SF1">
    <property type="entry name" value="HOLLIDAY JUNCTION BRANCH MIGRATION COMPLEX SUBUNIT RUVB"/>
    <property type="match status" value="1"/>
</dbReference>
<dbReference type="Pfam" id="PF17864">
    <property type="entry name" value="AAA_lid_4"/>
    <property type="match status" value="1"/>
</dbReference>
<dbReference type="Pfam" id="PF05491">
    <property type="entry name" value="RuvB_C"/>
    <property type="match status" value="1"/>
</dbReference>
<dbReference type="Pfam" id="PF05496">
    <property type="entry name" value="RuvB_N"/>
    <property type="match status" value="1"/>
</dbReference>
<dbReference type="SMART" id="SM00382">
    <property type="entry name" value="AAA"/>
    <property type="match status" value="1"/>
</dbReference>
<dbReference type="SUPFAM" id="SSF52540">
    <property type="entry name" value="P-loop containing nucleoside triphosphate hydrolases"/>
    <property type="match status" value="1"/>
</dbReference>
<dbReference type="SUPFAM" id="SSF46785">
    <property type="entry name" value="Winged helix' DNA-binding domain"/>
    <property type="match status" value="1"/>
</dbReference>
<reference key="1">
    <citation type="journal article" date="2011" name="J. Bacteriol.">
        <title>Genome sequence of lineage III Listeria monocytogenes strain HCC23.</title>
        <authorList>
            <person name="Steele C.L."/>
            <person name="Donaldson J.R."/>
            <person name="Paul D."/>
            <person name="Banes M.M."/>
            <person name="Arick T."/>
            <person name="Bridges S.M."/>
            <person name="Lawrence M.L."/>
        </authorList>
    </citation>
    <scope>NUCLEOTIDE SEQUENCE [LARGE SCALE GENOMIC DNA]</scope>
    <source>
        <strain>HCC23</strain>
    </source>
</reference>
<evidence type="ECO:0000255" key="1">
    <source>
        <dbReference type="HAMAP-Rule" id="MF_00016"/>
    </source>
</evidence>
<proteinExistence type="inferred from homology"/>
<organism>
    <name type="scientific">Listeria monocytogenes serotype 4a (strain HCC23)</name>
    <dbReference type="NCBI Taxonomy" id="552536"/>
    <lineage>
        <taxon>Bacteria</taxon>
        <taxon>Bacillati</taxon>
        <taxon>Bacillota</taxon>
        <taxon>Bacilli</taxon>
        <taxon>Bacillales</taxon>
        <taxon>Listeriaceae</taxon>
        <taxon>Listeria</taxon>
    </lineage>
</organism>
<keyword id="KW-0067">ATP-binding</keyword>
<keyword id="KW-0963">Cytoplasm</keyword>
<keyword id="KW-0227">DNA damage</keyword>
<keyword id="KW-0233">DNA recombination</keyword>
<keyword id="KW-0234">DNA repair</keyword>
<keyword id="KW-0238">DNA-binding</keyword>
<keyword id="KW-0378">Hydrolase</keyword>
<keyword id="KW-0547">Nucleotide-binding</keyword>
<feature type="chain" id="PRO_1000116646" description="Holliday junction branch migration complex subunit RuvB">
    <location>
        <begin position="1"/>
        <end position="335"/>
    </location>
</feature>
<feature type="region of interest" description="Large ATPase domain (RuvB-L)" evidence="1">
    <location>
        <begin position="1"/>
        <end position="183"/>
    </location>
</feature>
<feature type="region of interest" description="Small ATPAse domain (RuvB-S)" evidence="1">
    <location>
        <begin position="184"/>
        <end position="254"/>
    </location>
</feature>
<feature type="region of interest" description="Head domain (RuvB-H)" evidence="1">
    <location>
        <begin position="257"/>
        <end position="335"/>
    </location>
</feature>
<feature type="binding site" evidence="1">
    <location>
        <position position="22"/>
    </location>
    <ligand>
        <name>ATP</name>
        <dbReference type="ChEBI" id="CHEBI:30616"/>
    </ligand>
</feature>
<feature type="binding site" evidence="1">
    <location>
        <position position="23"/>
    </location>
    <ligand>
        <name>ATP</name>
        <dbReference type="ChEBI" id="CHEBI:30616"/>
    </ligand>
</feature>
<feature type="binding site" evidence="1">
    <location>
        <position position="64"/>
    </location>
    <ligand>
        <name>ATP</name>
        <dbReference type="ChEBI" id="CHEBI:30616"/>
    </ligand>
</feature>
<feature type="binding site" evidence="1">
    <location>
        <position position="67"/>
    </location>
    <ligand>
        <name>ATP</name>
        <dbReference type="ChEBI" id="CHEBI:30616"/>
    </ligand>
</feature>
<feature type="binding site" evidence="1">
    <location>
        <position position="68"/>
    </location>
    <ligand>
        <name>ATP</name>
        <dbReference type="ChEBI" id="CHEBI:30616"/>
    </ligand>
</feature>
<feature type="binding site" evidence="1">
    <location>
        <position position="68"/>
    </location>
    <ligand>
        <name>Mg(2+)</name>
        <dbReference type="ChEBI" id="CHEBI:18420"/>
    </ligand>
</feature>
<feature type="binding site" evidence="1">
    <location>
        <position position="69"/>
    </location>
    <ligand>
        <name>ATP</name>
        <dbReference type="ChEBI" id="CHEBI:30616"/>
    </ligand>
</feature>
<feature type="binding site" evidence="1">
    <location>
        <begin position="130"/>
        <end position="132"/>
    </location>
    <ligand>
        <name>ATP</name>
        <dbReference type="ChEBI" id="CHEBI:30616"/>
    </ligand>
</feature>
<feature type="binding site" evidence="1">
    <location>
        <position position="173"/>
    </location>
    <ligand>
        <name>ATP</name>
        <dbReference type="ChEBI" id="CHEBI:30616"/>
    </ligand>
</feature>
<feature type="binding site" evidence="1">
    <location>
        <position position="183"/>
    </location>
    <ligand>
        <name>ATP</name>
        <dbReference type="ChEBI" id="CHEBI:30616"/>
    </ligand>
</feature>
<feature type="binding site" evidence="1">
    <location>
        <position position="220"/>
    </location>
    <ligand>
        <name>ATP</name>
        <dbReference type="ChEBI" id="CHEBI:30616"/>
    </ligand>
</feature>
<feature type="binding site" evidence="1">
    <location>
        <position position="293"/>
    </location>
    <ligand>
        <name>DNA</name>
        <dbReference type="ChEBI" id="CHEBI:16991"/>
    </ligand>
</feature>
<feature type="binding site" evidence="1">
    <location>
        <position position="312"/>
    </location>
    <ligand>
        <name>DNA</name>
        <dbReference type="ChEBI" id="CHEBI:16991"/>
    </ligand>
</feature>
<feature type="binding site" evidence="1">
    <location>
        <position position="317"/>
    </location>
    <ligand>
        <name>DNA</name>
        <dbReference type="ChEBI" id="CHEBI:16991"/>
    </ligand>
</feature>
<protein>
    <recommendedName>
        <fullName evidence="1">Holliday junction branch migration complex subunit RuvB</fullName>
        <ecNumber evidence="1">3.6.4.-</ecNumber>
    </recommendedName>
</protein>
<comment type="function">
    <text evidence="1">The RuvA-RuvB-RuvC complex processes Holliday junction (HJ) DNA during genetic recombination and DNA repair, while the RuvA-RuvB complex plays an important role in the rescue of blocked DNA replication forks via replication fork reversal (RFR). RuvA specifically binds to HJ cruciform DNA, conferring on it an open structure. The RuvB hexamer acts as an ATP-dependent pump, pulling dsDNA into and through the RuvAB complex. RuvB forms 2 homohexamers on either side of HJ DNA bound by 1 or 2 RuvA tetramers; 4 subunits per hexamer contact DNA at a time. Coordinated motions by a converter formed by DNA-disengaged RuvB subunits stimulates ATP hydrolysis and nucleotide exchange. Immobilization of the converter enables RuvB to convert the ATP-contained energy into a lever motion, pulling 2 nucleotides of DNA out of the RuvA tetramer per ATP hydrolyzed, thus driving DNA branch migration. The RuvB motors rotate together with the DNA substrate, which together with the progressing nucleotide cycle form the mechanistic basis for DNA recombination by continuous HJ branch migration. Branch migration allows RuvC to scan DNA until it finds its consensus sequence, where it cleaves and resolves cruciform DNA.</text>
</comment>
<comment type="catalytic activity">
    <reaction evidence="1">
        <text>ATP + H2O = ADP + phosphate + H(+)</text>
        <dbReference type="Rhea" id="RHEA:13065"/>
        <dbReference type="ChEBI" id="CHEBI:15377"/>
        <dbReference type="ChEBI" id="CHEBI:15378"/>
        <dbReference type="ChEBI" id="CHEBI:30616"/>
        <dbReference type="ChEBI" id="CHEBI:43474"/>
        <dbReference type="ChEBI" id="CHEBI:456216"/>
    </reaction>
</comment>
<comment type="subunit">
    <text evidence="1">Homohexamer. Forms an RuvA(8)-RuvB(12)-Holliday junction (HJ) complex. HJ DNA is sandwiched between 2 RuvA tetramers; dsDNA enters through RuvA and exits via RuvB. An RuvB hexamer assembles on each DNA strand where it exits the tetramer. Each RuvB hexamer is contacted by two RuvA subunits (via domain III) on 2 adjacent RuvB subunits; this complex drives branch migration. In the full resolvosome a probable DNA-RuvA(4)-RuvB(12)-RuvC(2) complex forms which resolves the HJ.</text>
</comment>
<comment type="subcellular location">
    <subcellularLocation>
        <location evidence="1">Cytoplasm</location>
    </subcellularLocation>
</comment>
<comment type="domain">
    <text evidence="1">Has 3 domains, the large (RuvB-L) and small ATPase (RuvB-S) domains and the C-terminal head (RuvB-H) domain. The head domain binds DNA, while the ATPase domains jointly bind ATP, ADP or are empty depending on the state of the subunit in the translocation cycle. During a single DNA translocation step the structure of each domain remains the same, but their relative positions change.</text>
</comment>
<comment type="similarity">
    <text evidence="1">Belongs to the RuvB family.</text>
</comment>
<gene>
    <name evidence="1" type="primary">ruvB</name>
    <name type="ordered locus">LMHCC_1037</name>
</gene>
<accession>B8DHL6</accession>